<comment type="similarity">
    <text evidence="1">Belongs to the UPF0145 family.</text>
</comment>
<feature type="chain" id="PRO_0000225799" description="UPF0145 protein ACIAD2946">
    <location>
        <begin position="1"/>
        <end position="108"/>
    </location>
</feature>
<evidence type="ECO:0000255" key="1">
    <source>
        <dbReference type="HAMAP-Rule" id="MF_00338"/>
    </source>
</evidence>
<dbReference type="EMBL" id="CR543861">
    <property type="protein sequence ID" value="CAG69661.1"/>
    <property type="molecule type" value="Genomic_DNA"/>
</dbReference>
<dbReference type="SMR" id="Q6F8F4"/>
<dbReference type="STRING" id="202950.GCA_001485005_02864"/>
<dbReference type="KEGG" id="aci:ACIAD2946"/>
<dbReference type="eggNOG" id="COG0393">
    <property type="taxonomic scope" value="Bacteria"/>
</dbReference>
<dbReference type="HOGENOM" id="CLU_117144_1_2_6"/>
<dbReference type="Proteomes" id="UP000000430">
    <property type="component" value="Chromosome"/>
</dbReference>
<dbReference type="Gene3D" id="3.30.110.70">
    <property type="entry name" value="Hypothetical protein apc22750. Chain B"/>
    <property type="match status" value="1"/>
</dbReference>
<dbReference type="HAMAP" id="MF_00338">
    <property type="entry name" value="UPF0145"/>
    <property type="match status" value="1"/>
</dbReference>
<dbReference type="InterPro" id="IPR035439">
    <property type="entry name" value="UPF0145_dom_sf"/>
</dbReference>
<dbReference type="InterPro" id="IPR002765">
    <property type="entry name" value="UPF0145_YbjQ-like"/>
</dbReference>
<dbReference type="PANTHER" id="PTHR34068:SF2">
    <property type="entry name" value="UPF0145 PROTEIN SCO3412"/>
    <property type="match status" value="1"/>
</dbReference>
<dbReference type="PANTHER" id="PTHR34068">
    <property type="entry name" value="UPF0145 PROTEIN YBJQ"/>
    <property type="match status" value="1"/>
</dbReference>
<dbReference type="Pfam" id="PF01906">
    <property type="entry name" value="YbjQ_1"/>
    <property type="match status" value="1"/>
</dbReference>
<dbReference type="SUPFAM" id="SSF117782">
    <property type="entry name" value="YbjQ-like"/>
    <property type="match status" value="1"/>
</dbReference>
<reference key="1">
    <citation type="journal article" date="2004" name="Nucleic Acids Res.">
        <title>Unique features revealed by the genome sequence of Acinetobacter sp. ADP1, a versatile and naturally transformation competent bacterium.</title>
        <authorList>
            <person name="Barbe V."/>
            <person name="Vallenet D."/>
            <person name="Fonknechten N."/>
            <person name="Kreimeyer A."/>
            <person name="Oztas S."/>
            <person name="Labarre L."/>
            <person name="Cruveiller S."/>
            <person name="Robert C."/>
            <person name="Duprat S."/>
            <person name="Wincker P."/>
            <person name="Ornston L.N."/>
            <person name="Weissenbach J."/>
            <person name="Marliere P."/>
            <person name="Cohen G.N."/>
            <person name="Medigue C."/>
        </authorList>
    </citation>
    <scope>NUCLEOTIDE SEQUENCE [LARGE SCALE GENOMIC DNA]</scope>
    <source>
        <strain>ATCC 33305 / BD413 / ADP1</strain>
    </source>
</reference>
<protein>
    <recommendedName>
        <fullName evidence="1">UPF0145 protein ACIAD2946</fullName>
    </recommendedName>
</protein>
<gene>
    <name type="ordered locus">ACIAD2946</name>
</gene>
<accession>Q6F8F4</accession>
<sequence length="108" mass="11635">MPGHEITQQLDVVYGSTVRSKHVGRDLLAGLKNIVGGELTAYTELLEESRQEAMQRMIAKAQQLGANAIVGIRFSTSNIAQGASELFVYGTAVIVQPNAPKLPDPFNP</sequence>
<proteinExistence type="inferred from homology"/>
<name>Y2946_ACIAD</name>
<organism>
    <name type="scientific">Acinetobacter baylyi (strain ATCC 33305 / BD413 / ADP1)</name>
    <dbReference type="NCBI Taxonomy" id="62977"/>
    <lineage>
        <taxon>Bacteria</taxon>
        <taxon>Pseudomonadati</taxon>
        <taxon>Pseudomonadota</taxon>
        <taxon>Gammaproteobacteria</taxon>
        <taxon>Moraxellales</taxon>
        <taxon>Moraxellaceae</taxon>
        <taxon>Acinetobacter</taxon>
    </lineage>
</organism>